<comment type="catalytic activity">
    <reaction>
        <text>D-ribulose 5-phosphate + ATP = D-ribulose 1,5-bisphosphate + ADP + H(+)</text>
        <dbReference type="Rhea" id="RHEA:19365"/>
        <dbReference type="ChEBI" id="CHEBI:15378"/>
        <dbReference type="ChEBI" id="CHEBI:30616"/>
        <dbReference type="ChEBI" id="CHEBI:57870"/>
        <dbReference type="ChEBI" id="CHEBI:58121"/>
        <dbReference type="ChEBI" id="CHEBI:456216"/>
        <dbReference type="EC" id="2.7.1.19"/>
    </reaction>
</comment>
<comment type="pathway">
    <text>Carbohydrate biosynthesis; Calvin cycle.</text>
</comment>
<comment type="subunit">
    <text>Homooctamer.</text>
</comment>
<comment type="similarity">
    <text evidence="3">Belongs to the phosphoribulokinase family.</text>
</comment>
<keyword id="KW-0067">ATP-binding</keyword>
<keyword id="KW-0113">Calvin cycle</keyword>
<keyword id="KW-0903">Direct protein sequencing</keyword>
<keyword id="KW-0418">Kinase</keyword>
<keyword id="KW-0547">Nucleotide-binding</keyword>
<keyword id="KW-0614">Plasmid</keyword>
<keyword id="KW-1185">Reference proteome</keyword>
<keyword id="KW-0808">Transferase</keyword>
<gene>
    <name type="primary">cfxP</name>
    <name type="synonym">cbbPP</name>
    <name type="ordered locus">PHG421</name>
</gene>
<accession>P19924</accession>
<sequence>MSERYPIIAITGSSGAGTTSVTRTFENIFCREGVKSVVIEGDSFHRYDRAEMKVKMAEAERTGNMNFSHFGAENNLFGDLESLFRSYAESGTGMRRRYLHSTEEAAPFGQQPGTFTAWEPLPADTDLLFYEGLHGGVVTDEVNVAQYPNLLIGVVPVINLEWIQKLWRDKKQRGYSTEAVTDTILRRMPDYVNYICPQFSRTHVNFQRVPCVDTSNPFISREIPAPDESMVVIRFANPKGIDFQYLLSMIHDSFMSRANTIVVPGGKMELAMQLIFTPFVLRMMERRKRAAL</sequence>
<feature type="initiator methionine" description="Removed" evidence="2">
    <location>
        <position position="1"/>
    </location>
</feature>
<feature type="chain" id="PRO_0000201950" description="Phosphoribulokinase, plasmid">
    <location>
        <begin position="2"/>
        <end position="292"/>
    </location>
</feature>
<feature type="binding site" evidence="1">
    <location>
        <begin position="12"/>
        <end position="20"/>
    </location>
    <ligand>
        <name>ATP</name>
        <dbReference type="ChEBI" id="CHEBI:30616"/>
    </ligand>
</feature>
<evidence type="ECO:0000250" key="1"/>
<evidence type="ECO:0000269" key="2">
    <source>
    </source>
</evidence>
<evidence type="ECO:0000305" key="3"/>
<name>KPPR1_CUPNH</name>
<dbReference type="EC" id="2.7.1.19"/>
<dbReference type="EMBL" id="M33562">
    <property type="protein sequence ID" value="AAA21957.1"/>
    <property type="molecule type" value="Genomic_DNA"/>
</dbReference>
<dbReference type="EMBL" id="AY305378">
    <property type="protein sequence ID" value="AAP86170.1"/>
    <property type="molecule type" value="Genomic_DNA"/>
</dbReference>
<dbReference type="PIR" id="JQ0400">
    <property type="entry name" value="JQ0400"/>
</dbReference>
<dbReference type="RefSeq" id="WP_011154333.1">
    <property type="nucleotide sequence ID" value="NC_005241.1"/>
</dbReference>
<dbReference type="SMR" id="P19924"/>
<dbReference type="KEGG" id="reh:PHG421"/>
<dbReference type="PATRIC" id="fig|381666.6.peg.349"/>
<dbReference type="eggNOG" id="COG3954">
    <property type="taxonomic scope" value="Bacteria"/>
</dbReference>
<dbReference type="HOGENOM" id="CLU_962223_0_0_4"/>
<dbReference type="OrthoDB" id="9773443at2"/>
<dbReference type="UniPathway" id="UPA00116"/>
<dbReference type="Proteomes" id="UP000008210">
    <property type="component" value="Plasmid megaplasmid pHG1"/>
</dbReference>
<dbReference type="GO" id="GO:0005524">
    <property type="term" value="F:ATP binding"/>
    <property type="evidence" value="ECO:0007669"/>
    <property type="project" value="UniProtKB-KW"/>
</dbReference>
<dbReference type="GO" id="GO:0008974">
    <property type="term" value="F:phosphoribulokinase activity"/>
    <property type="evidence" value="ECO:0007669"/>
    <property type="project" value="UniProtKB-EC"/>
</dbReference>
<dbReference type="GO" id="GO:0019253">
    <property type="term" value="P:reductive pentose-phosphate cycle"/>
    <property type="evidence" value="ECO:0007669"/>
    <property type="project" value="UniProtKB-UniPathway"/>
</dbReference>
<dbReference type="Gene3D" id="3.40.50.300">
    <property type="entry name" value="P-loop containing nucleotide triphosphate hydrolases"/>
    <property type="match status" value="1"/>
</dbReference>
<dbReference type="InterPro" id="IPR027417">
    <property type="entry name" value="P-loop_NTPase"/>
</dbReference>
<dbReference type="InterPro" id="IPR006082">
    <property type="entry name" value="PRK"/>
</dbReference>
<dbReference type="InterPro" id="IPR006083">
    <property type="entry name" value="PRK/URK"/>
</dbReference>
<dbReference type="NCBIfam" id="NF011997">
    <property type="entry name" value="PRK15453.1"/>
    <property type="match status" value="1"/>
</dbReference>
<dbReference type="Pfam" id="PF00485">
    <property type="entry name" value="PRK"/>
    <property type="match status" value="1"/>
</dbReference>
<dbReference type="PRINTS" id="PR00478">
    <property type="entry name" value="PHRIBLKINASE"/>
</dbReference>
<dbReference type="SUPFAM" id="SSF52540">
    <property type="entry name" value="P-loop containing nucleoside triphosphate hydrolases"/>
    <property type="match status" value="1"/>
</dbReference>
<dbReference type="PROSITE" id="PS00567">
    <property type="entry name" value="PHOSPHORIBULOKINASE"/>
    <property type="match status" value="1"/>
</dbReference>
<organism>
    <name type="scientific">Cupriavidus necator (strain ATCC 17699 / DSM 428 / KCTC 22496 / NCIMB 10442 / H16 / Stanier 337)</name>
    <name type="common">Ralstonia eutropha</name>
    <dbReference type="NCBI Taxonomy" id="381666"/>
    <lineage>
        <taxon>Bacteria</taxon>
        <taxon>Pseudomonadati</taxon>
        <taxon>Pseudomonadota</taxon>
        <taxon>Betaproteobacteria</taxon>
        <taxon>Burkholderiales</taxon>
        <taxon>Burkholderiaceae</taxon>
        <taxon>Cupriavidus</taxon>
    </lineage>
</organism>
<proteinExistence type="evidence at protein level"/>
<reference key="1">
    <citation type="journal article" date="1989" name="Gene">
        <title>Sequence analysis of the chromosomal and plasmid genes encoding phosphoribulokinase from Alcaligenes eutrophus.</title>
        <authorList>
            <person name="Kossmann J."/>
            <person name="Klintworth R."/>
            <person name="Bowien B."/>
        </authorList>
    </citation>
    <scope>NUCLEOTIDE SEQUENCE [GENOMIC DNA]</scope>
</reference>
<reference key="2">
    <citation type="journal article" date="2003" name="J. Mol. Biol.">
        <title>Complete nucleotide sequence of pHG1: a Ralstonia eutropha H16 megaplasmid encoding key enzymes of H(2)-based lithoautotrophy and anaerobiosis.</title>
        <authorList>
            <person name="Schwartz E."/>
            <person name="Henne A."/>
            <person name="Cramm R."/>
            <person name="Eitinger T."/>
            <person name="Friedrich B."/>
            <person name="Gottschalk G."/>
        </authorList>
    </citation>
    <scope>NUCLEOTIDE SEQUENCE [LARGE SCALE GENOMIC DNA]</scope>
    <source>
        <strain>ATCC 17699 / DSM 428 / KCTC 22496 / NCIMB 10442 / H16 / Stanier 337</strain>
    </source>
</reference>
<reference key="3">
    <citation type="journal article" date="1985" name="J. Bacteriol.">
        <title>Chromosomal and plasmid locations for phosphoribulokinase genes in Alcaligenes eutrophus.</title>
        <authorList>
            <person name="Klintworth R."/>
            <person name="Husemann M."/>
            <person name="Salnikow J."/>
            <person name="Bowien B."/>
        </authorList>
    </citation>
    <scope>PROTEIN SEQUENCE OF 2-18</scope>
</reference>
<geneLocation type="plasmid">
    <name>megaplasmid pHG1</name>
</geneLocation>
<protein>
    <recommendedName>
        <fullName>Phosphoribulokinase, plasmid</fullName>
        <shortName>PRK</shortName>
        <shortName>PRKase</shortName>
        <ecNumber>2.7.1.19</ecNumber>
    </recommendedName>
    <alternativeName>
        <fullName>Phosphopentokinase</fullName>
    </alternativeName>
</protein>